<organism>
    <name type="scientific">Arabidopsis thaliana</name>
    <name type="common">Mouse-ear cress</name>
    <dbReference type="NCBI Taxonomy" id="3702"/>
    <lineage>
        <taxon>Eukaryota</taxon>
        <taxon>Viridiplantae</taxon>
        <taxon>Streptophyta</taxon>
        <taxon>Embryophyta</taxon>
        <taxon>Tracheophyta</taxon>
        <taxon>Spermatophyta</taxon>
        <taxon>Magnoliopsida</taxon>
        <taxon>eudicotyledons</taxon>
        <taxon>Gunneridae</taxon>
        <taxon>Pentapetalae</taxon>
        <taxon>rosids</taxon>
        <taxon>malvids</taxon>
        <taxon>Brassicales</taxon>
        <taxon>Brassicaceae</taxon>
        <taxon>Camelineae</taxon>
        <taxon>Arabidopsis</taxon>
    </lineage>
</organism>
<proteinExistence type="evidence at protein level"/>
<protein>
    <recommendedName>
        <fullName evidence="13">DNA damage-binding protein 1a</fullName>
    </recommendedName>
    <alternativeName>
        <fullName evidence="13">UV-damaged DNA-binding protein 1a</fullName>
        <shortName evidence="13">DDB1a</shortName>
    </alternativeName>
</protein>
<gene>
    <name evidence="13" type="primary">DDB1A</name>
    <name evidence="15" type="ordered locus">At4g05420</name>
    <name evidence="16" type="ORF">C6L9.100</name>
</gene>
<reference key="1">
    <citation type="journal article" date="1999" name="Nature">
        <title>Sequence and analysis of chromosome 4 of the plant Arabidopsis thaliana.</title>
        <authorList>
            <person name="Mayer K.F.X."/>
            <person name="Schueller C."/>
            <person name="Wambutt R."/>
            <person name="Murphy G."/>
            <person name="Volckaert G."/>
            <person name="Pohl T."/>
            <person name="Duesterhoeft A."/>
            <person name="Stiekema W."/>
            <person name="Entian K.-D."/>
            <person name="Terryn N."/>
            <person name="Harris B."/>
            <person name="Ansorge W."/>
            <person name="Brandt P."/>
            <person name="Grivell L.A."/>
            <person name="Rieger M."/>
            <person name="Weichselgartner M."/>
            <person name="de Simone V."/>
            <person name="Obermaier B."/>
            <person name="Mache R."/>
            <person name="Mueller M."/>
            <person name="Kreis M."/>
            <person name="Delseny M."/>
            <person name="Puigdomenech P."/>
            <person name="Watson M."/>
            <person name="Schmidtheini T."/>
            <person name="Reichert B."/>
            <person name="Portetelle D."/>
            <person name="Perez-Alonso M."/>
            <person name="Boutry M."/>
            <person name="Bancroft I."/>
            <person name="Vos P."/>
            <person name="Hoheisel J."/>
            <person name="Zimmermann W."/>
            <person name="Wedler H."/>
            <person name="Ridley P."/>
            <person name="Langham S.-A."/>
            <person name="McCullagh B."/>
            <person name="Bilham L."/>
            <person name="Robben J."/>
            <person name="van der Schueren J."/>
            <person name="Grymonprez B."/>
            <person name="Chuang Y.-J."/>
            <person name="Vandenbussche F."/>
            <person name="Braeken M."/>
            <person name="Weltjens I."/>
            <person name="Voet M."/>
            <person name="Bastiaens I."/>
            <person name="Aert R."/>
            <person name="Defoor E."/>
            <person name="Weitzenegger T."/>
            <person name="Bothe G."/>
            <person name="Ramsperger U."/>
            <person name="Hilbert H."/>
            <person name="Braun M."/>
            <person name="Holzer E."/>
            <person name="Brandt A."/>
            <person name="Peters S."/>
            <person name="van Staveren M."/>
            <person name="Dirkse W."/>
            <person name="Mooijman P."/>
            <person name="Klein Lankhorst R."/>
            <person name="Rose M."/>
            <person name="Hauf J."/>
            <person name="Koetter P."/>
            <person name="Berneiser S."/>
            <person name="Hempel S."/>
            <person name="Feldpausch M."/>
            <person name="Lamberth S."/>
            <person name="Van den Daele H."/>
            <person name="De Keyser A."/>
            <person name="Buysshaert C."/>
            <person name="Gielen J."/>
            <person name="Villarroel R."/>
            <person name="De Clercq R."/>
            <person name="van Montagu M."/>
            <person name="Rogers J."/>
            <person name="Cronin A."/>
            <person name="Quail M.A."/>
            <person name="Bray-Allen S."/>
            <person name="Clark L."/>
            <person name="Doggett J."/>
            <person name="Hall S."/>
            <person name="Kay M."/>
            <person name="Lennard N."/>
            <person name="McLay K."/>
            <person name="Mayes R."/>
            <person name="Pettett A."/>
            <person name="Rajandream M.A."/>
            <person name="Lyne M."/>
            <person name="Benes V."/>
            <person name="Rechmann S."/>
            <person name="Borkova D."/>
            <person name="Bloecker H."/>
            <person name="Scharfe M."/>
            <person name="Grimm M."/>
            <person name="Loehnert T.-H."/>
            <person name="Dose S."/>
            <person name="de Haan M."/>
            <person name="Maarse A.C."/>
            <person name="Schaefer M."/>
            <person name="Mueller-Auer S."/>
            <person name="Gabel C."/>
            <person name="Fuchs M."/>
            <person name="Fartmann B."/>
            <person name="Granderath K."/>
            <person name="Dauner D."/>
            <person name="Herzl A."/>
            <person name="Neumann S."/>
            <person name="Argiriou A."/>
            <person name="Vitale D."/>
            <person name="Liguori R."/>
            <person name="Piravandi E."/>
            <person name="Massenet O."/>
            <person name="Quigley F."/>
            <person name="Clabauld G."/>
            <person name="Muendlein A."/>
            <person name="Felber R."/>
            <person name="Schnabl S."/>
            <person name="Hiller R."/>
            <person name="Schmidt W."/>
            <person name="Lecharny A."/>
            <person name="Aubourg S."/>
            <person name="Chefdor F."/>
            <person name="Cooke R."/>
            <person name="Berger C."/>
            <person name="Monfort A."/>
            <person name="Casacuberta E."/>
            <person name="Gibbons T."/>
            <person name="Weber N."/>
            <person name="Vandenbol M."/>
            <person name="Bargues M."/>
            <person name="Terol J."/>
            <person name="Torres A."/>
            <person name="Perez-Perez A."/>
            <person name="Purnelle B."/>
            <person name="Bent E."/>
            <person name="Johnson S."/>
            <person name="Tacon D."/>
            <person name="Jesse T."/>
            <person name="Heijnen L."/>
            <person name="Schwarz S."/>
            <person name="Scholler P."/>
            <person name="Heber S."/>
            <person name="Francs P."/>
            <person name="Bielke C."/>
            <person name="Frishman D."/>
            <person name="Haase D."/>
            <person name="Lemcke K."/>
            <person name="Mewes H.-W."/>
            <person name="Stocker S."/>
            <person name="Zaccaria P."/>
            <person name="Bevan M."/>
            <person name="Wilson R.K."/>
            <person name="de la Bastide M."/>
            <person name="Habermann K."/>
            <person name="Parnell L."/>
            <person name="Dedhia N."/>
            <person name="Gnoj L."/>
            <person name="Schutz K."/>
            <person name="Huang E."/>
            <person name="Spiegel L."/>
            <person name="Sekhon M."/>
            <person name="Murray J."/>
            <person name="Sheet P."/>
            <person name="Cordes M."/>
            <person name="Abu-Threideh J."/>
            <person name="Stoneking T."/>
            <person name="Kalicki J."/>
            <person name="Graves T."/>
            <person name="Harmon G."/>
            <person name="Edwards J."/>
            <person name="Latreille P."/>
            <person name="Courtney L."/>
            <person name="Cloud J."/>
            <person name="Abbott A."/>
            <person name="Scott K."/>
            <person name="Johnson D."/>
            <person name="Minx P."/>
            <person name="Bentley D."/>
            <person name="Fulton B."/>
            <person name="Miller N."/>
            <person name="Greco T."/>
            <person name="Kemp K."/>
            <person name="Kramer J."/>
            <person name="Fulton L."/>
            <person name="Mardis E."/>
            <person name="Dante M."/>
            <person name="Pepin K."/>
            <person name="Hillier L.W."/>
            <person name="Nelson J."/>
            <person name="Spieth J."/>
            <person name="Ryan E."/>
            <person name="Andrews S."/>
            <person name="Geisel C."/>
            <person name="Layman D."/>
            <person name="Du H."/>
            <person name="Ali J."/>
            <person name="Berghoff A."/>
            <person name="Jones K."/>
            <person name="Drone K."/>
            <person name="Cotton M."/>
            <person name="Joshu C."/>
            <person name="Antonoiu B."/>
            <person name="Zidanic M."/>
            <person name="Strong C."/>
            <person name="Sun H."/>
            <person name="Lamar B."/>
            <person name="Yordan C."/>
            <person name="Ma P."/>
            <person name="Zhong J."/>
            <person name="Preston R."/>
            <person name="Vil D."/>
            <person name="Shekher M."/>
            <person name="Matero A."/>
            <person name="Shah R."/>
            <person name="Swaby I.K."/>
            <person name="O'Shaughnessy A."/>
            <person name="Rodriguez M."/>
            <person name="Hoffman J."/>
            <person name="Till S."/>
            <person name="Granat S."/>
            <person name="Shohdy N."/>
            <person name="Hasegawa A."/>
            <person name="Hameed A."/>
            <person name="Lodhi M."/>
            <person name="Johnson A."/>
            <person name="Chen E."/>
            <person name="Marra M.A."/>
            <person name="Martienssen R."/>
            <person name="McCombie W.R."/>
        </authorList>
    </citation>
    <scope>NUCLEOTIDE SEQUENCE [LARGE SCALE GENOMIC DNA]</scope>
    <source>
        <strain>cv. Columbia</strain>
    </source>
</reference>
<reference key="2">
    <citation type="journal article" date="2017" name="Plant J.">
        <title>Araport11: a complete reannotation of the Arabidopsis thaliana reference genome.</title>
        <authorList>
            <person name="Cheng C.Y."/>
            <person name="Krishnakumar V."/>
            <person name="Chan A.P."/>
            <person name="Thibaud-Nissen F."/>
            <person name="Schobel S."/>
            <person name="Town C.D."/>
        </authorList>
    </citation>
    <scope>GENOME REANNOTATION</scope>
    <source>
        <strain>cv. Columbia</strain>
    </source>
</reference>
<reference key="3">
    <citation type="journal article" date="2003" name="Science">
        <title>Empirical analysis of transcriptional activity in the Arabidopsis genome.</title>
        <authorList>
            <person name="Yamada K."/>
            <person name="Lim J."/>
            <person name="Dale J.M."/>
            <person name="Chen H."/>
            <person name="Shinn P."/>
            <person name="Palm C.J."/>
            <person name="Southwick A.M."/>
            <person name="Wu H.C."/>
            <person name="Kim C.J."/>
            <person name="Nguyen M."/>
            <person name="Pham P.K."/>
            <person name="Cheuk R.F."/>
            <person name="Karlin-Newmann G."/>
            <person name="Liu S.X."/>
            <person name="Lam B."/>
            <person name="Sakano H."/>
            <person name="Wu T."/>
            <person name="Yu G."/>
            <person name="Miranda M."/>
            <person name="Quach H.L."/>
            <person name="Tripp M."/>
            <person name="Chang C.H."/>
            <person name="Lee J.M."/>
            <person name="Toriumi M.J."/>
            <person name="Chan M.M."/>
            <person name="Tang C.C."/>
            <person name="Onodera C.S."/>
            <person name="Deng J.M."/>
            <person name="Akiyama K."/>
            <person name="Ansari Y."/>
            <person name="Arakawa T."/>
            <person name="Banh J."/>
            <person name="Banno F."/>
            <person name="Bowser L."/>
            <person name="Brooks S.Y."/>
            <person name="Carninci P."/>
            <person name="Chao Q."/>
            <person name="Choy N."/>
            <person name="Enju A."/>
            <person name="Goldsmith A.D."/>
            <person name="Gurjal M."/>
            <person name="Hansen N.F."/>
            <person name="Hayashizaki Y."/>
            <person name="Johnson-Hopson C."/>
            <person name="Hsuan V.W."/>
            <person name="Iida K."/>
            <person name="Karnes M."/>
            <person name="Khan S."/>
            <person name="Koesema E."/>
            <person name="Ishida J."/>
            <person name="Jiang P.X."/>
            <person name="Jones T."/>
            <person name="Kawai J."/>
            <person name="Kamiya A."/>
            <person name="Meyers C."/>
            <person name="Nakajima M."/>
            <person name="Narusaka M."/>
            <person name="Seki M."/>
            <person name="Sakurai T."/>
            <person name="Satou M."/>
            <person name="Tamse R."/>
            <person name="Vaysberg M."/>
            <person name="Wallender E.K."/>
            <person name="Wong C."/>
            <person name="Yamamura Y."/>
            <person name="Yuan S."/>
            <person name="Shinozaki K."/>
            <person name="Davis R.W."/>
            <person name="Theologis A."/>
            <person name="Ecker J.R."/>
        </authorList>
    </citation>
    <scope>NUCLEOTIDE SEQUENCE [LARGE SCALE MRNA]</scope>
    <source>
        <strain>cv. Columbia</strain>
    </source>
</reference>
<reference key="4">
    <citation type="submission" date="2006-07" db="EMBL/GenBank/DDBJ databases">
        <title>Large-scale analysis of RIKEN Arabidopsis full-length (RAFL) cDNAs.</title>
        <authorList>
            <person name="Totoki Y."/>
            <person name="Seki M."/>
            <person name="Ishida J."/>
            <person name="Nakajima M."/>
            <person name="Enju A."/>
            <person name="Kamiya A."/>
            <person name="Narusaka M."/>
            <person name="Shin-i T."/>
            <person name="Nakagawa M."/>
            <person name="Sakamoto N."/>
            <person name="Oishi K."/>
            <person name="Kohara Y."/>
            <person name="Kobayashi M."/>
            <person name="Toyoda A."/>
            <person name="Sakaki Y."/>
            <person name="Sakurai T."/>
            <person name="Iida K."/>
            <person name="Akiyama K."/>
            <person name="Satou M."/>
            <person name="Toyoda T."/>
            <person name="Konagaya A."/>
            <person name="Carninci P."/>
            <person name="Kawai J."/>
            <person name="Hayashizaki Y."/>
            <person name="Shinozaki K."/>
        </authorList>
    </citation>
    <scope>NUCLEOTIDE SEQUENCE [LARGE SCALE MRNA] OF 362-1088</scope>
    <source>
        <strain>cv. Columbia</strain>
    </source>
</reference>
<reference key="5">
    <citation type="journal article" date="2002" name="Curr. Biol.">
        <title>De-etiolated 1 and damaged DNA binding protein 1 interact to regulate Arabidopsis photomorphogenesis.</title>
        <authorList>
            <person name="Schroeder D.F."/>
            <person name="Gahrtz M."/>
            <person name="Maxwell B.B."/>
            <person name="Cook R.K."/>
            <person name="Kan J.M."/>
            <person name="Alonso J.M."/>
            <person name="Ecker J.R."/>
            <person name="Chory J."/>
        </authorList>
    </citation>
    <scope>INTERACTION WITH DET1</scope>
</reference>
<reference key="6">
    <citation type="journal article" date="2004" name="Genes Dev.">
        <title>Arabidopsis COP10 forms a complex with DDB1 and DET1 in vivo and enhances the activity of ubiquitin conjugating enzymes.</title>
        <authorList>
            <person name="Yanagawa Y."/>
            <person name="Sullivan J.A."/>
            <person name="Komatsu S."/>
            <person name="Gusmaroli G."/>
            <person name="Suzuki G."/>
            <person name="Yin J."/>
            <person name="Ishibashi T."/>
            <person name="Saijo Y."/>
            <person name="Rubio V."/>
            <person name="Kimura S."/>
            <person name="Wang J."/>
            <person name="Deng X.-W."/>
        </authorList>
    </citation>
    <scope>COMPONENT OF CDD COMPLEX WITH COP10 AND DET1</scope>
</reference>
<reference key="7">
    <citation type="journal article" date="2006" name="Plant Cell">
        <title>Arabidopsis CULLIN4 forms an E3 ubiquitin ligase with RBX1 and the CDD complex in mediating light control of development.</title>
        <authorList>
            <person name="Chen H."/>
            <person name="Shen Y."/>
            <person name="Tang X."/>
            <person name="Yu L."/>
            <person name="Wang J."/>
            <person name="Guo L."/>
            <person name="Zhang Y."/>
            <person name="Zhang H."/>
            <person name="Feng S."/>
            <person name="Strickland E."/>
            <person name="Zheng N."/>
            <person name="Deng X.-W."/>
        </authorList>
    </citation>
    <scope>INTERACTION WITH CUL4</scope>
    <scope>IDENTIFICATION IN THE CUL4-RBX1-CDD E3 LIGASE COMPLEX</scope>
</reference>
<reference key="8">
    <citation type="journal article" date="2006" name="Plant J.">
        <title>CUL4 associates with DDB1 and DET1 and its downregulation affects diverse aspects of development in Arabidopsis thaliana.</title>
        <authorList>
            <person name="Bernhardt A."/>
            <person name="Lechner E."/>
            <person name="Hano P."/>
            <person name="Schade V."/>
            <person name="Dieterle M."/>
            <person name="Anders M."/>
            <person name="Dubin M.J."/>
            <person name="Benvenuto G."/>
            <person name="Bowler C."/>
            <person name="Genschik P."/>
            <person name="Hellmann H."/>
        </authorList>
    </citation>
    <scope>INTERACTION WITH CUL4 AND WITH DDB2</scope>
</reference>
<reference key="9">
    <citation type="journal article" date="2007" name="Genetics">
        <title>DDB2, DDB1A and DET1 exhibit complex interactions during Arabidopsis development.</title>
        <authorList>
            <person name="Al Khateeb W.M."/>
            <person name="Schroeder D.F."/>
        </authorList>
    </citation>
    <scope>COMPONENT OF THE UV-DDB COMPLEX</scope>
</reference>
<reference key="10">
    <citation type="journal article" date="2008" name="PLoS Genet.">
        <title>Regulation and role of Arabidopsis CUL4-DDB1A-DDB2 in maintaining genome integrity upon UV stress.</title>
        <authorList>
            <person name="Molinier J."/>
            <person name="Lechner E."/>
            <person name="Dumbliauskas E."/>
            <person name="Genschik P."/>
        </authorList>
    </citation>
    <scope>FUNCTION</scope>
    <scope>INTERACTION WITH CUL4 AND DDB2</scope>
    <scope>SUBCELLULAR LOCATION</scope>
</reference>
<reference key="11">
    <citation type="journal article" date="2008" name="Plant Cell">
        <title>Characterization of Arabidopsis and rice DWD proteins and their roles as substrate receptors for CUL4-RING E3 ubiquitin ligases.</title>
        <authorList>
            <person name="Lee J.H."/>
            <person name="Terzaghi W."/>
            <person name="Gusmaroli G."/>
            <person name="Charron J.B."/>
            <person name="Yoon H.J."/>
            <person name="Chen H."/>
            <person name="He Y.J."/>
            <person name="Xiong Y."/>
            <person name="Deng X.W."/>
        </authorList>
    </citation>
    <scope>INTERACTION WITH PRL1 AND RAE1</scope>
    <scope>COMPONENT OF THE CUL4-RBX1-DDB1-PRL1 COMPLEX</scope>
</reference>
<reference key="12">
    <citation type="journal article" date="2010" name="Plant J.">
        <title>The DDB1a interacting proteins ATCSA-1 and DDB2 are critical factors for UV-B tolerance and genomic integrity in Arabidopsis thaliana.</title>
        <authorList>
            <person name="Biedermann S."/>
            <person name="Hellmann H."/>
        </authorList>
    </citation>
    <scope>INTERACTION WITH ATCSA-1</scope>
</reference>
<reference key="13">
    <citation type="journal article" date="2011" name="Plant Sci.">
        <title>DWA3, an Arabidopsis DWD protein, acts as a negative regulator in ABA signal transduction.</title>
        <authorList>
            <person name="Lee J.-H."/>
            <person name="Terzaghi W."/>
            <person name="Deng X.W."/>
        </authorList>
    </citation>
    <scope>INTERACTION WITH KTN80.2/DWA3</scope>
    <source>
        <strain>cv. Columbia</strain>
    </source>
</reference>
<reference key="14">
    <citation type="journal article" date="2012" name="Plant Cell">
        <title>Arabidopsis WD repeat domain55 Interacts with DNA damaged binding protein1 and is required for apical patterning in the embryo.</title>
        <authorList>
            <person name="Bjerkan K.N."/>
            <person name="Jung-Romeo S."/>
            <person name="Jurgens G."/>
            <person name="Genschik P."/>
            <person name="Grini P.E."/>
        </authorList>
    </citation>
    <scope>INTERACTION WITH WDR55</scope>
</reference>
<reference key="15">
    <citation type="journal article" date="2014" name="Mol. Cells">
        <title>Characterization of a novel DWD protein that participates in heat stress response in Arabidopsis.</title>
        <authorList>
            <person name="Kim S.-H."/>
            <person name="Lee J.-H."/>
            <person name="Seo K.-I."/>
            <person name="Ryu B."/>
            <person name="Sung Y."/>
            <person name="Chung T."/>
            <person name="Deng X.W."/>
            <person name="Lee J.-H."/>
        </authorList>
    </citation>
    <scope>INTERACTION WITH HTD1</scope>
</reference>
<reference key="16">
    <citation type="journal article" date="2014" name="Plant Cell">
        <title>Targeted degradation of abscisic acid receptors is mediated by the ubiquitin ligase substrate adaptor DDA1 in Arabidopsis.</title>
        <authorList>
            <person name="Irigoyen M.L."/>
            <person name="Iniesto E."/>
            <person name="Rodriguez L."/>
            <person name="Puga M.I."/>
            <person name="Yanagawa Y."/>
            <person name="Pick E."/>
            <person name="Strickland E."/>
            <person name="Paz-Ares J."/>
            <person name="Wei N."/>
            <person name="De Jaeger G."/>
            <person name="Rodriguez P.L."/>
            <person name="Deng X.W."/>
            <person name="Rubio V."/>
        </authorList>
    </citation>
    <scope>IDENTIFICATION IN CDD COMPLEX WITH COP10 AND DET1</scope>
    <scope>INTERACTION WITH DDA1</scope>
</reference>
<reference key="17">
    <citation type="journal article" date="2014" name="Plant Mol. Biol.">
        <title>DWD HYPERSENSITIVE TO UV-B 1 is negatively involved in UV-B mediated cellular responses in Arabidopsis.</title>
        <authorList>
            <person name="Kim S.-H."/>
            <person name="Kim H."/>
            <person name="Seo K.-I."/>
            <person name="Kim S.-H."/>
            <person name="Chung S."/>
            <person name="Huang X."/>
            <person name="Yang P."/>
            <person name="Deng X.W."/>
            <person name="Lee J.-H."/>
        </authorList>
    </citation>
    <scope>INTERACTION WITH DHU1</scope>
    <source>
        <strain>cv. Columbia</strain>
    </source>
</reference>
<reference key="18">
    <citation type="journal article" date="2016" name="Plant Cell Environ.">
        <title>ASG2 is a farnesylated DWD protein that acts as ABA negative regulator in Arabidopsis.</title>
        <authorList>
            <person name="Dutilleul C."/>
            <person name="Ribeiro I."/>
            <person name="Blanc N."/>
            <person name="Nezames C.D."/>
            <person name="Deng X.W."/>
            <person name="Zglobicki P."/>
            <person name="Palacio Barrera A.M."/>
            <person name="Atehortua L."/>
            <person name="Courtois M."/>
            <person name="Labas V."/>
            <person name="Giglioli-Guivarc'h N."/>
            <person name="Ducos E."/>
        </authorList>
    </citation>
    <scope>SUBCELLULAR LOCATION</scope>
    <scope>INTERACTION WITH ASG2</scope>
    <source>
        <strain>cv. Columbia</strain>
    </source>
</reference>
<accession>Q9M0V3</accession>
<accession>Q0WL42</accession>
<accession>Q8VY31</accession>
<sequence>MSSWNYVVTAHKPTSVTHSCVGNFTSPQELNLIVAKCTRIEIHLLTPQGLQPMLDVPIYGRIATLELFRPHGEAQDFLFIATERYKFCVLQWDPESSELITRAMGDVSDRIGRPTDNGQIGIIDPDCRLIGLHLYDGLFKVIPFDNKGQLKEAFNIRLEELQVLDIKFLFGCAKPTIAVLYQDNKDARHVKTYEVSLKDKDFVEGPWSQNSLDNGADLLIPVPPPLCGVLIIGEETIVYCSASAFKAIPIRPSITKAYGRVDVDGSRYLLGDHAGMIHLLVITHEKEKVTGLKIELLGETSIASTISYLDNAVVFVGSSYGDSQLVKLNLHPDAKGSYVEVLERYINLGPIVDFCVVDLERQGQGQVVTCSGAFKDGSLRVVRNGIGINEQASVELQGIKGMWSLKSSIDEAFDTFLVVSFISETRILAMNLEDELEETEIEGFLSQVQTLFCHDAVYNQLVQVTSNSVRLVSSTTRELRDEWHAPAGFTVNVATANASQVLLATGGGHLVYLEIGDGKLTEVQHALLEYEVSCLDINPIGDNPNYSQLAAVGMWTDISVRIFSLPELTLITKEQLGGEIIPRSVLLCAFEGISYLLCALGDGHLLNFQMDTTTGQLKDRKKVSLGTQPITLRTFSSKSATHVFAASDRPTVIYSSNKKLLYSNVNLKEVSHMCPFNSAAFPDSLAIAREGELTIGTIDDIQKLHIRTIPLGEHARRICHQEQTRTFGICSLGNQSNSEESEMHFVRLLDDQTFEFMSTYPLDSFEYGCSILSCSFTEDKNVYYCVGTAYVLPEENEPTKGRILVFIVEDGRLQLIAEKETKGAVYSLNAFNGKLLAAINQKIQLYKWMLRDDGTRELQSECGHHGHILALYVQTRGDFIVVGDLMKSISLLLYKHEEGAIEERARDYNANWMSAVEILDDDIYLGAENNFNLLTVKKNSEGATDEERGRLEVVGEYHLGEFVNRFRHGSLVMRLPDSEIGQIPTVIFGTVNGVIGVIASLPQEQYTFLEKLQSSLRKVIKGVGGLSHEQWRSFNNEKRTAEARNFLDGDLIESFLDLSRNKMEDISKSMNVQVEELCKRVEELTRLH</sequence>
<comment type="function">
    <text evidence="5">Component of light signal transduction machinery. Involved in repression of photomorphogenesis in darkness by participating in the CDD complex, a complex probably required to regulate the activity of ubiquitin conjugating enzymes (E2s). Repression of photomorphogenesis is probably mediated by ubiquitination and subsequent degradation of photomorphogenesis-promoting factors such as HY5, HYH and LAF1. Plays a role in DNA repair by forming with DDB2 the UV-damaged DNA-binding protein complex (UV-DDB). Component of the CUL4-RBX1-DDB1-PRL1 E3 ubiquitin-protein ligase complex.</text>
</comment>
<comment type="pathway">
    <text>Protein modification; protein ubiquitination.</text>
</comment>
<comment type="subunit">
    <text evidence="1 2 3 4 6 7 8 9 10 11 12">Component of the CDD complex, at least composed of COP10, DET1 and DDB1A (PubMed:15342494, PubMed:24563205). Component of the CUL4-RBX1-CDD complex (PubMed:16844902). Component of the CUL4-RBX1-DDB1-PRL1 E3 ubiquitin-protein ligase complex (PubMed:18223036). Component of the UV-DDB complex, which is composed of DDB1A and DDB2 (PubMed:17409070). Interacts with RAE1 (PubMed:16844902, PubMed:18223036). Interacts with WDR55 (PubMed:22447688). Interacts with ATCSA-1 (PubMed:20128879). Interacts with DDA1 (PubMed:24563205). Binds to ASG2; the subcellular localization of this complex depends on ASG2 farnesylation status (PubMed:26147561). Binds to KTN80.2/DWA3 (PubMed:21421380). Interacts with HTD1 (PubMed:25358503). Interacts directly with DHU1 (PubMed:25193399).</text>
</comment>
<comment type="interaction">
    <interactant intactId="EBI-1632780">
        <id>Q9M0V3</id>
    </interactant>
    <interactant intactId="EBI-1632868">
        <id>Q8H177</id>
        <label>At1g65030</label>
    </interactant>
    <organismsDiffer>false</organismsDiffer>
    <experiments>2</experiments>
</comment>
<comment type="interaction">
    <interactant intactId="EBI-1632780">
        <id>Q9M0V3</id>
    </interactant>
    <interactant intactId="EBI-2429853">
        <id>Q9LJD7</id>
        <label>COP10</label>
    </interactant>
    <organismsDiffer>false</organismsDiffer>
    <experiments>5</experiments>
</comment>
<comment type="interaction">
    <interactant intactId="EBI-1632780">
        <id>Q9M0V3</id>
    </interactant>
    <interactant intactId="EBI-541750">
        <id>Q8LGH4</id>
        <label>CUL4</label>
    </interactant>
    <organismsDiffer>false</organismsDiffer>
    <experiments>11</experiments>
</comment>
<comment type="interaction">
    <interactant intactId="EBI-1632780">
        <id>Q9M0V3</id>
    </interactant>
    <interactant intactId="EBI-2429941">
        <id>Q9M086</id>
        <label>DCAF1</label>
    </interactant>
    <organismsDiffer>false</organismsDiffer>
    <experiments>6</experiments>
</comment>
<comment type="interaction">
    <interactant intactId="EBI-1632780">
        <id>Q9M0V3</id>
    </interactant>
    <interactant intactId="EBI-1632891">
        <id>Q9M1E5</id>
        <label>F9K21.200</label>
    </interactant>
    <organismsDiffer>false</organismsDiffer>
    <experiments>2</experiments>
</comment>
<comment type="interaction">
    <interactant intactId="EBI-1632780">
        <id>Q9M0V3</id>
    </interactant>
    <interactant intactId="EBI-1632794">
        <id>O22469</id>
        <label>MSI3</label>
    </interactant>
    <organismsDiffer>false</organismsDiffer>
    <experiments>2</experiments>
</comment>
<comment type="interaction">
    <interactant intactId="EBI-1632780">
        <id>Q9M0V3</id>
    </interactant>
    <interactant intactId="EBI-9661079">
        <id>O22607</id>
        <label>MSI4</label>
    </interactant>
    <organismsDiffer>false</organismsDiffer>
    <experiments>2</experiments>
</comment>
<comment type="interaction">
    <interactant intactId="EBI-1632780">
        <id>Q9M0V3</id>
    </interactant>
    <interactant intactId="EBI-941035">
        <id>Q8L4M1</id>
        <label>THO6</label>
    </interactant>
    <organismsDiffer>false</organismsDiffer>
    <experiments>2</experiments>
</comment>
<comment type="interaction">
    <interactant intactId="EBI-1632780">
        <id>Q9M0V3</id>
    </interactant>
    <interactant intactId="EBI-1632819">
        <id>Q9SZQ5</id>
        <label>VIP3</label>
    </interactant>
    <organismsDiffer>false</organismsDiffer>
    <experiments>2</experiments>
</comment>
<comment type="interaction">
    <interactant intactId="EBI-8565056">
        <id>Q9M0V3-1</id>
    </interactant>
    <interactant intactId="EBI-2028926">
        <id>Q6NQ88</id>
        <label>DDB2</label>
    </interactant>
    <organismsDiffer>false</organismsDiffer>
    <experiments>2</experiments>
</comment>
<comment type="interaction">
    <interactant intactId="EBI-8565056">
        <id>Q9M0V3-1</id>
    </interactant>
    <interactant intactId="EBI-632891">
        <id>O22467</id>
        <label>MSI1</label>
    </interactant>
    <organismsDiffer>false</organismsDiffer>
    <experiments>3</experiments>
</comment>
<comment type="subcellular location">
    <subcellularLocation>
        <location evidence="5 12">Cytoplasm</location>
    </subcellularLocation>
    <subcellularLocation>
        <location evidence="5 12">Nucleus</location>
    </subcellularLocation>
    <text evidence="5 12">Translocates to the nucleus upon exposure to UV (PubMed:18551167). Excluded from the nucleus when in complex with farnesylated ASG2 (PubMed:26147561).</text>
</comment>
<comment type="alternative products">
    <event type="alternative splicing"/>
    <isoform>
        <id>Q9M0V3-1</id>
        <name>1</name>
        <sequence type="displayed"/>
    </isoform>
    <text>A number of isoforms are produced. According to EST sequences.</text>
</comment>
<comment type="similarity">
    <text evidence="14">Belongs to the DDB1 family.</text>
</comment>
<keyword id="KW-0025">Alternative splicing</keyword>
<keyword id="KW-0963">Cytoplasm</keyword>
<keyword id="KW-0227">DNA damage</keyword>
<keyword id="KW-0234">DNA repair</keyword>
<keyword id="KW-0238">DNA-binding</keyword>
<keyword id="KW-0539">Nucleus</keyword>
<keyword id="KW-0607">Phytochrome signaling pathway</keyword>
<keyword id="KW-1185">Reference proteome</keyword>
<keyword id="KW-0833">Ubl conjugation pathway</keyword>
<evidence type="ECO:0000269" key="1">
    <source>
    </source>
</evidence>
<evidence type="ECO:0000269" key="2">
    <source>
    </source>
</evidence>
<evidence type="ECO:0000269" key="3">
    <source>
    </source>
</evidence>
<evidence type="ECO:0000269" key="4">
    <source>
    </source>
</evidence>
<evidence type="ECO:0000269" key="5">
    <source>
    </source>
</evidence>
<evidence type="ECO:0000269" key="6">
    <source>
    </source>
</evidence>
<evidence type="ECO:0000269" key="7">
    <source>
    </source>
</evidence>
<evidence type="ECO:0000269" key="8">
    <source>
    </source>
</evidence>
<evidence type="ECO:0000269" key="9">
    <source>
    </source>
</evidence>
<evidence type="ECO:0000269" key="10">
    <source>
    </source>
</evidence>
<evidence type="ECO:0000269" key="11">
    <source>
    </source>
</evidence>
<evidence type="ECO:0000269" key="12">
    <source>
    </source>
</evidence>
<evidence type="ECO:0000303" key="13">
    <source>
    </source>
</evidence>
<evidence type="ECO:0000305" key="14"/>
<evidence type="ECO:0000312" key="15">
    <source>
        <dbReference type="Araport" id="AT4G05420"/>
    </source>
</evidence>
<evidence type="ECO:0000312" key="16">
    <source>
        <dbReference type="EMBL" id="CAB81084.1"/>
    </source>
</evidence>
<name>DDB1A_ARATH</name>
<dbReference type="EMBL" id="AL161503">
    <property type="protein sequence ID" value="CAB81084.1"/>
    <property type="molecule type" value="Genomic_DNA"/>
</dbReference>
<dbReference type="EMBL" id="CP002687">
    <property type="protein sequence ID" value="AEE82517.1"/>
    <property type="molecule type" value="Genomic_DNA"/>
</dbReference>
<dbReference type="EMBL" id="AY074257">
    <property type="protein sequence ID" value="AAL66955.1"/>
    <property type="molecule type" value="mRNA"/>
</dbReference>
<dbReference type="EMBL" id="BT001905">
    <property type="protein sequence ID" value="AAN71904.1"/>
    <property type="molecule type" value="mRNA"/>
</dbReference>
<dbReference type="EMBL" id="AK230366">
    <property type="protein sequence ID" value="BAF02165.1"/>
    <property type="molecule type" value="mRNA"/>
</dbReference>
<dbReference type="PIR" id="B85068">
    <property type="entry name" value="B85068"/>
</dbReference>
<dbReference type="RefSeq" id="NP_192451.1">
    <molecule id="Q9M0V3-1"/>
    <property type="nucleotide sequence ID" value="NM_116781.3"/>
</dbReference>
<dbReference type="SMR" id="Q9M0V3"/>
<dbReference type="BioGRID" id="11201">
    <property type="interactions" value="72"/>
</dbReference>
<dbReference type="DIP" id="DIP-40455N"/>
<dbReference type="FunCoup" id="Q9M0V3">
    <property type="interactions" value="5049"/>
</dbReference>
<dbReference type="IntAct" id="Q9M0V3">
    <property type="interactions" value="24"/>
</dbReference>
<dbReference type="MINT" id="Q9M0V3"/>
<dbReference type="STRING" id="3702.Q9M0V3"/>
<dbReference type="iPTMnet" id="Q9M0V3"/>
<dbReference type="PaxDb" id="3702-AT4G05420.1"/>
<dbReference type="ProteomicsDB" id="224042">
    <molecule id="Q9M0V3-1"/>
</dbReference>
<dbReference type="EnsemblPlants" id="AT4G05420.1">
    <molecule id="Q9M0V3-1"/>
    <property type="protein sequence ID" value="AT4G05420.1"/>
    <property type="gene ID" value="AT4G05420"/>
</dbReference>
<dbReference type="GeneID" id="825890"/>
<dbReference type="Gramene" id="AT4G05420.1">
    <molecule id="Q9M0V3-1"/>
    <property type="protein sequence ID" value="AT4G05420.1"/>
    <property type="gene ID" value="AT4G05420"/>
</dbReference>
<dbReference type="KEGG" id="ath:AT4G05420"/>
<dbReference type="Araport" id="AT4G05420"/>
<dbReference type="TAIR" id="AT4G05420">
    <property type="gene designation" value="DDB1A"/>
</dbReference>
<dbReference type="eggNOG" id="KOG1897">
    <property type="taxonomic scope" value="Eukaryota"/>
</dbReference>
<dbReference type="HOGENOM" id="CLU_002893_0_1_1"/>
<dbReference type="InParanoid" id="Q9M0V3"/>
<dbReference type="OMA" id="HQDFLMR"/>
<dbReference type="OrthoDB" id="433457at2759"/>
<dbReference type="PhylomeDB" id="Q9M0V3"/>
<dbReference type="UniPathway" id="UPA00143"/>
<dbReference type="PRO" id="PR:Q9M0V3"/>
<dbReference type="Proteomes" id="UP000006548">
    <property type="component" value="Chromosome 4"/>
</dbReference>
<dbReference type="ExpressionAtlas" id="Q9M0V3">
    <property type="expression patterns" value="baseline and differential"/>
</dbReference>
<dbReference type="GO" id="GO:0080008">
    <property type="term" value="C:Cul4-RING E3 ubiquitin ligase complex"/>
    <property type="evidence" value="ECO:0000353"/>
    <property type="project" value="TAIR"/>
</dbReference>
<dbReference type="GO" id="GO:0005737">
    <property type="term" value="C:cytoplasm"/>
    <property type="evidence" value="ECO:0000250"/>
    <property type="project" value="UniProtKB"/>
</dbReference>
<dbReference type="GO" id="GO:0005829">
    <property type="term" value="C:cytosol"/>
    <property type="evidence" value="ECO:0000314"/>
    <property type="project" value="UniProtKB"/>
</dbReference>
<dbReference type="GO" id="GO:0005634">
    <property type="term" value="C:nucleus"/>
    <property type="evidence" value="ECO:0000314"/>
    <property type="project" value="UniProtKB"/>
</dbReference>
<dbReference type="GO" id="GO:0003677">
    <property type="term" value="F:DNA binding"/>
    <property type="evidence" value="ECO:0007669"/>
    <property type="project" value="UniProtKB-KW"/>
</dbReference>
<dbReference type="GO" id="GO:0006281">
    <property type="term" value="P:DNA repair"/>
    <property type="evidence" value="ECO:0007669"/>
    <property type="project" value="UniProtKB-KW"/>
</dbReference>
<dbReference type="GO" id="GO:0045892">
    <property type="term" value="P:negative regulation of DNA-templated transcription"/>
    <property type="evidence" value="ECO:0000353"/>
    <property type="project" value="TAIR"/>
</dbReference>
<dbReference type="GO" id="GO:0016567">
    <property type="term" value="P:protein ubiquitination"/>
    <property type="evidence" value="ECO:0007669"/>
    <property type="project" value="UniProtKB-UniPathway"/>
</dbReference>
<dbReference type="GO" id="GO:0009585">
    <property type="term" value="P:red, far-red light phototransduction"/>
    <property type="evidence" value="ECO:0007669"/>
    <property type="project" value="UniProtKB-KW"/>
</dbReference>
<dbReference type="FunFam" id="2.130.10.10:FF:000070">
    <property type="entry name" value="DNA damage-binding protein 1"/>
    <property type="match status" value="1"/>
</dbReference>
<dbReference type="FunFam" id="1.10.150.910:FF:000003">
    <property type="entry name" value="DNA damage-binding protein 1a"/>
    <property type="match status" value="1"/>
</dbReference>
<dbReference type="FunFam" id="2.130.10.10:FF:000182">
    <property type="entry name" value="DNA damage-binding protein 1a"/>
    <property type="match status" value="1"/>
</dbReference>
<dbReference type="FunFam" id="2.130.10.10:FF:000267">
    <property type="entry name" value="DNA damage-binding protein 1a"/>
    <property type="match status" value="1"/>
</dbReference>
<dbReference type="Gene3D" id="1.10.150.910">
    <property type="match status" value="1"/>
</dbReference>
<dbReference type="Gene3D" id="2.130.10.10">
    <property type="entry name" value="YVTN repeat-like/Quinoprotein amine dehydrogenase"/>
    <property type="match status" value="3"/>
</dbReference>
<dbReference type="InterPro" id="IPR018846">
    <property type="entry name" value="Beta-prop_RSE1/DDB1/CPSF1_1st"/>
</dbReference>
<dbReference type="InterPro" id="IPR004871">
    <property type="entry name" value="Cleavage/polyA-sp_fac_asu_C"/>
</dbReference>
<dbReference type="InterPro" id="IPR050358">
    <property type="entry name" value="RSE1/DDB1/CFT1/CPSF1"/>
</dbReference>
<dbReference type="InterPro" id="IPR015943">
    <property type="entry name" value="WD40/YVTN_repeat-like_dom_sf"/>
</dbReference>
<dbReference type="InterPro" id="IPR036322">
    <property type="entry name" value="WD40_repeat_dom_sf"/>
</dbReference>
<dbReference type="PANTHER" id="PTHR10644">
    <property type="entry name" value="DNA REPAIR/RNA PROCESSING CPSF FAMILY"/>
    <property type="match status" value="1"/>
</dbReference>
<dbReference type="Pfam" id="PF10433">
    <property type="entry name" value="Beta-prop_RSE1_1st"/>
    <property type="match status" value="1"/>
</dbReference>
<dbReference type="Pfam" id="PF23726">
    <property type="entry name" value="Beta-prop_RSE1_2nd"/>
    <property type="match status" value="1"/>
</dbReference>
<dbReference type="Pfam" id="PF03178">
    <property type="entry name" value="CPSF_A"/>
    <property type="match status" value="1"/>
</dbReference>
<dbReference type="SUPFAM" id="SSF50978">
    <property type="entry name" value="WD40 repeat-like"/>
    <property type="match status" value="1"/>
</dbReference>
<feature type="chain" id="PRO_0000079837" description="DNA damage-binding protein 1a">
    <location>
        <begin position="1"/>
        <end position="1088"/>
    </location>
</feature>